<comment type="subcellular location">
    <subcellularLocation>
        <location evidence="1">Cell membrane</location>
        <topology evidence="1">Multi-pass membrane protein</topology>
    </subcellularLocation>
</comment>
<comment type="similarity">
    <text evidence="1">Belongs to the AAE transporter (TC 2.A.81) family. YidE subfamily.</text>
</comment>
<gene>
    <name evidence="1" type="primary">yidE</name>
    <name type="ordered locus">SPC_3891</name>
</gene>
<protein>
    <recommendedName>
        <fullName evidence="1">Putative transport protein YidE</fullName>
    </recommendedName>
</protein>
<sequence length="553" mass="58907">MSDIALTVSVLALVAVVGLWIGNIKVRGVGFGIGGVLFGGIIVGHFVDQAGVTLSGDMLHFIQEFGLILFVYTIGIQVGPGFFASLRVSGLRLNLFAVLIVIMGGLVTAILHKIFAIPLPVVLGIFSGAVTNTPALGAGQQILRDLGTPVDLVDQMGMSYAMAYPFGICGILLTMWLMRLIFRVNVEAEAQKHESSLANGHSLIQTMNIRVENPNLNNMAIQDVPILNSDKIICSRLKRDDTLMVPSPGTIIQAGDLLHLVGQSTDLHNAQLVIGKEVDTSLSTRGTDLRVERVVVTNEKVLGKRIRDLHFKERYDVVISRLNRAGVELVASSDASLQFGDILNLVGRPASIDAVANVVGNAQQKLQQVQMLPVFIGIGLGVLLGSIPLFVPGFPVALKLGLAGGPLIMALILGRIGSIGKLYWFMPPSANLALRELGIVLFLAVVGLKSGGDFVDTLTQGEGLSWIGYGIFITAIPLITIGLLARIFAKMNYLTLCGMLAGSMTDPPALAFANNLHATSGAAALSYATVYPLVMFLRIITPQLLAVIFWGMG</sequence>
<organism>
    <name type="scientific">Salmonella paratyphi C (strain RKS4594)</name>
    <dbReference type="NCBI Taxonomy" id="476213"/>
    <lineage>
        <taxon>Bacteria</taxon>
        <taxon>Pseudomonadati</taxon>
        <taxon>Pseudomonadota</taxon>
        <taxon>Gammaproteobacteria</taxon>
        <taxon>Enterobacterales</taxon>
        <taxon>Enterobacteriaceae</taxon>
        <taxon>Salmonella</taxon>
    </lineage>
</organism>
<name>YIDE_SALPC</name>
<proteinExistence type="inferred from homology"/>
<keyword id="KW-1003">Cell membrane</keyword>
<keyword id="KW-0472">Membrane</keyword>
<keyword id="KW-0677">Repeat</keyword>
<keyword id="KW-0812">Transmembrane</keyword>
<keyword id="KW-1133">Transmembrane helix</keyword>
<keyword id="KW-0813">Transport</keyword>
<feature type="chain" id="PRO_1000149003" description="Putative transport protein YidE">
    <location>
        <begin position="1"/>
        <end position="553"/>
    </location>
</feature>
<feature type="transmembrane region" description="Helical" evidence="1">
    <location>
        <begin position="4"/>
        <end position="24"/>
    </location>
</feature>
<feature type="transmembrane region" description="Helical" evidence="1">
    <location>
        <begin position="28"/>
        <end position="48"/>
    </location>
</feature>
<feature type="transmembrane region" description="Helical" evidence="1">
    <location>
        <begin position="65"/>
        <end position="85"/>
    </location>
</feature>
<feature type="transmembrane region" description="Helical" evidence="1">
    <location>
        <begin position="95"/>
        <end position="115"/>
    </location>
</feature>
<feature type="transmembrane region" description="Helical" evidence="1">
    <location>
        <begin position="158"/>
        <end position="178"/>
    </location>
</feature>
<feature type="transmembrane region" description="Helical" evidence="1">
    <location>
        <begin position="371"/>
        <end position="391"/>
    </location>
</feature>
<feature type="transmembrane region" description="Helical" evidence="1">
    <location>
        <begin position="393"/>
        <end position="413"/>
    </location>
</feature>
<feature type="transmembrane region" description="Helical" evidence="1">
    <location>
        <begin position="437"/>
        <end position="457"/>
    </location>
</feature>
<feature type="transmembrane region" description="Helical" evidence="1">
    <location>
        <begin position="464"/>
        <end position="484"/>
    </location>
</feature>
<feature type="transmembrane region" description="Helical" evidence="1">
    <location>
        <begin position="493"/>
        <end position="513"/>
    </location>
</feature>
<feature type="transmembrane region" description="Helical" evidence="1">
    <location>
        <begin position="533"/>
        <end position="553"/>
    </location>
</feature>
<feature type="domain" description="RCK C-terminal 1" evidence="1">
    <location>
        <begin position="192"/>
        <end position="276"/>
    </location>
</feature>
<feature type="domain" description="RCK C-terminal 2" evidence="1">
    <location>
        <begin position="279"/>
        <end position="361"/>
    </location>
</feature>
<reference key="1">
    <citation type="journal article" date="2009" name="PLoS ONE">
        <title>Salmonella paratyphi C: genetic divergence from Salmonella choleraesuis and pathogenic convergence with Salmonella typhi.</title>
        <authorList>
            <person name="Liu W.-Q."/>
            <person name="Feng Y."/>
            <person name="Wang Y."/>
            <person name="Zou Q.-H."/>
            <person name="Chen F."/>
            <person name="Guo J.-T."/>
            <person name="Peng Y.-H."/>
            <person name="Jin Y."/>
            <person name="Li Y.-G."/>
            <person name="Hu S.-N."/>
            <person name="Johnston R.N."/>
            <person name="Liu G.-R."/>
            <person name="Liu S.-L."/>
        </authorList>
    </citation>
    <scope>NUCLEOTIDE SEQUENCE [LARGE SCALE GENOMIC DNA]</scope>
    <source>
        <strain>RKS4594</strain>
    </source>
</reference>
<dbReference type="EMBL" id="CP000857">
    <property type="protein sequence ID" value="ACN47963.1"/>
    <property type="molecule type" value="Genomic_DNA"/>
</dbReference>
<dbReference type="RefSeq" id="WP_001279792.1">
    <property type="nucleotide sequence ID" value="NC_012125.1"/>
</dbReference>
<dbReference type="SMR" id="C0Q247"/>
<dbReference type="KEGG" id="sei:SPC_3891"/>
<dbReference type="HOGENOM" id="CLU_035023_3_1_6"/>
<dbReference type="Proteomes" id="UP000001599">
    <property type="component" value="Chromosome"/>
</dbReference>
<dbReference type="GO" id="GO:0005886">
    <property type="term" value="C:plasma membrane"/>
    <property type="evidence" value="ECO:0007669"/>
    <property type="project" value="UniProtKB-SubCell"/>
</dbReference>
<dbReference type="GO" id="GO:0008324">
    <property type="term" value="F:monoatomic cation transmembrane transporter activity"/>
    <property type="evidence" value="ECO:0007669"/>
    <property type="project" value="InterPro"/>
</dbReference>
<dbReference type="GO" id="GO:0006813">
    <property type="term" value="P:potassium ion transport"/>
    <property type="evidence" value="ECO:0007669"/>
    <property type="project" value="InterPro"/>
</dbReference>
<dbReference type="FunFam" id="3.30.70.1450:FF:000004">
    <property type="entry name" value="Putative transport protein YidE"/>
    <property type="match status" value="1"/>
</dbReference>
<dbReference type="Gene3D" id="3.30.70.1450">
    <property type="entry name" value="Regulator of K+ conductance, C-terminal domain"/>
    <property type="match status" value="2"/>
</dbReference>
<dbReference type="HAMAP" id="MF_01016">
    <property type="entry name" value="YidE"/>
    <property type="match status" value="1"/>
</dbReference>
<dbReference type="InterPro" id="IPR050144">
    <property type="entry name" value="AAE_transporter"/>
</dbReference>
<dbReference type="InterPro" id="IPR006037">
    <property type="entry name" value="RCK_C"/>
</dbReference>
<dbReference type="InterPro" id="IPR036721">
    <property type="entry name" value="RCK_C_sf"/>
</dbReference>
<dbReference type="InterPro" id="IPR023018">
    <property type="entry name" value="Transpt_YidE_put"/>
</dbReference>
<dbReference type="InterPro" id="IPR006512">
    <property type="entry name" value="YidE_YbjL"/>
</dbReference>
<dbReference type="NCBIfam" id="NF003007">
    <property type="entry name" value="PRK03818.1"/>
    <property type="match status" value="1"/>
</dbReference>
<dbReference type="NCBIfam" id="TIGR01625">
    <property type="entry name" value="YidE_YbjL_dupl"/>
    <property type="match status" value="2"/>
</dbReference>
<dbReference type="PANTHER" id="PTHR30445">
    <property type="entry name" value="K(+)_H(+) ANTIPORTER SUBUNIT KHTT"/>
    <property type="match status" value="1"/>
</dbReference>
<dbReference type="PANTHER" id="PTHR30445:SF3">
    <property type="entry name" value="TRANSPORT PROTEIN YIDE-RELATED"/>
    <property type="match status" value="1"/>
</dbReference>
<dbReference type="Pfam" id="PF06826">
    <property type="entry name" value="Asp-Al_Ex"/>
    <property type="match status" value="2"/>
</dbReference>
<dbReference type="Pfam" id="PF02080">
    <property type="entry name" value="TrkA_C"/>
    <property type="match status" value="2"/>
</dbReference>
<dbReference type="SUPFAM" id="SSF116726">
    <property type="entry name" value="TrkA C-terminal domain-like"/>
    <property type="match status" value="2"/>
</dbReference>
<dbReference type="PROSITE" id="PS51202">
    <property type="entry name" value="RCK_C"/>
    <property type="match status" value="2"/>
</dbReference>
<evidence type="ECO:0000255" key="1">
    <source>
        <dbReference type="HAMAP-Rule" id="MF_01016"/>
    </source>
</evidence>
<accession>C0Q247</accession>